<comment type="function">
    <text evidence="1 2 4">Involved in cholesterol side chain degradation (PubMed:22045806, PubMed:25203216). Catalyzes the hydration of 3-oxo-4,17-pregnadiene-20-carboxyl-CoA (3-OPDC-CoA) to form 17-hydroxy-3-oxo-4-pregnene-20-carboxyl-CoA (17-HOPC-CoA), in the modified beta-oxidation pathway for cholesterol side chain degradation (PubMed:25203216, PubMed:31568719). Can also use octenoyl-CoA and decenoyl-CoA, with lower efficiency (PubMed:25203216).</text>
</comment>
<comment type="catalytic activity">
    <reaction evidence="2 4">
        <text>3-oxochola-4,17-dien-22-oyl-CoA + H2O = 17-hydroxy-3-oxochol-4-en-22-oyl-CoA</text>
        <dbReference type="Rhea" id="RHEA:46336"/>
        <dbReference type="ChEBI" id="CHEBI:15377"/>
        <dbReference type="ChEBI" id="CHEBI:86020"/>
        <dbReference type="ChEBI" id="CHEBI:86028"/>
    </reaction>
    <physiologicalReaction direction="left-to-right" evidence="2 4">
        <dbReference type="Rhea" id="RHEA:46337"/>
    </physiologicalReaction>
</comment>
<comment type="catalytic activity">
    <reaction evidence="2">
        <text>(2E)-octenoyl-CoA + H2O = 3-hydroxyoctanoyl-CoA</text>
        <dbReference type="Rhea" id="RHEA:46348"/>
        <dbReference type="ChEBI" id="CHEBI:15377"/>
        <dbReference type="ChEBI" id="CHEBI:62242"/>
        <dbReference type="ChEBI" id="CHEBI:86040"/>
    </reaction>
</comment>
<comment type="catalytic activity">
    <reaction evidence="2">
        <text>(2E)-decenoyl-CoA + H2O = 3-hydroxydecanoyl-CoA</text>
        <dbReference type="Rhea" id="RHEA:46352"/>
        <dbReference type="ChEBI" id="CHEBI:15377"/>
        <dbReference type="ChEBI" id="CHEBI:61406"/>
        <dbReference type="ChEBI" id="CHEBI:86041"/>
    </reaction>
</comment>
<comment type="activity regulation">
    <text evidence="3">In the absence of the Ltp2 aldolase, ChsH1/ChsH2 can hydrate only about 30% of the 3-OPDC-CoA substrate. Complete turnover requires the presence of Ltp2.</text>
</comment>
<comment type="pathway">
    <text evidence="1 2">Steroid metabolism; cholesterol degradation.</text>
</comment>
<comment type="subunit">
    <text evidence="2 3 4">Heterodimer composed of ChsH1 and ChsH2. Two heterodimers combine to form a heterotetramer (PubMed:25203216). The complex interacts with Ltp2 via the DUF35 C-terminal region of ChsH2 (PubMed:29109182, PubMed:31568719). The ChsH1-ChsH2-Ltp2 protein complex is composed of two protomers that form a heterohexameric structure through the Ltp2 dimerization interface (PubMed:31568719).</text>
</comment>
<comment type="similarity">
    <text evidence="6">Belongs to the thioester dehydratase family.</text>
</comment>
<feature type="chain" id="PRO_0000452240" description="3-oxo-4,17-pregnadiene-20-carboxyl-CoA hydratase beta subunit">
    <location>
        <begin position="1"/>
        <end position="129"/>
    </location>
</feature>
<feature type="mutagenesis site" description="Retains 2-4% of activity. Still forms heterotetramers." evidence="2">
    <original>D</original>
    <variation>A</variation>
    <location>
        <position position="29"/>
    </location>
</feature>
<feature type="mutagenesis site" description="Loss of activity. Still forms heterotetramers." evidence="2">
    <original>H</original>
    <variation>A</variation>
    <location>
        <position position="34"/>
    </location>
</feature>
<keyword id="KW-0002">3D-structure</keyword>
<keyword id="KW-0153">Cholesterol metabolism</keyword>
<keyword id="KW-0443">Lipid metabolism</keyword>
<keyword id="KW-0456">Lyase</keyword>
<keyword id="KW-1185">Reference proteome</keyword>
<keyword id="KW-0753">Steroid metabolism</keyword>
<keyword id="KW-1207">Sterol metabolism</keyword>
<sequence length="129" mass="13952">MTVVGAVLPELKLYGDPTFIVSTALATRDFQDVHHDRDKAVAQGSKDIFVNILTDTGLVQRYVTDWAGPSALIKSIGLRLGVPWYAYDTVTFSGEVTAVNDGLITVKVVGRNTLGDHVTATVELSMRDS</sequence>
<gene>
    <name evidence="5" type="primary">chsH1</name>
    <name evidence="7" type="ordered locus">Rv3541c</name>
</gene>
<proteinExistence type="evidence at protein level"/>
<evidence type="ECO:0000269" key="1">
    <source>
    </source>
</evidence>
<evidence type="ECO:0000269" key="2">
    <source>
    </source>
</evidence>
<evidence type="ECO:0000269" key="3">
    <source>
    </source>
</evidence>
<evidence type="ECO:0000269" key="4">
    <source>
    </source>
</evidence>
<evidence type="ECO:0000303" key="5">
    <source>
    </source>
</evidence>
<evidence type="ECO:0000305" key="6"/>
<evidence type="ECO:0000312" key="7">
    <source>
        <dbReference type="EMBL" id="CCP46363.1"/>
    </source>
</evidence>
<evidence type="ECO:0007744" key="8">
    <source>
        <dbReference type="PDB" id="4W78"/>
    </source>
</evidence>
<evidence type="ECO:0007744" key="9">
    <source>
        <dbReference type="PDB" id="4WNB"/>
    </source>
</evidence>
<organism>
    <name type="scientific">Mycobacterium tuberculosis (strain ATCC 25618 / H37Rv)</name>
    <dbReference type="NCBI Taxonomy" id="83332"/>
    <lineage>
        <taxon>Bacteria</taxon>
        <taxon>Bacillati</taxon>
        <taxon>Actinomycetota</taxon>
        <taxon>Actinomycetes</taxon>
        <taxon>Mycobacteriales</taxon>
        <taxon>Mycobacteriaceae</taxon>
        <taxon>Mycobacterium</taxon>
        <taxon>Mycobacterium tuberculosis complex</taxon>
    </lineage>
</organism>
<dbReference type="EC" id="4.2.1.-" evidence="2 4"/>
<dbReference type="EMBL" id="AL123456">
    <property type="protein sequence ID" value="CCP46363.1"/>
    <property type="molecule type" value="Genomic_DNA"/>
</dbReference>
<dbReference type="RefSeq" id="NP_218058.1">
    <property type="nucleotide sequence ID" value="NC_000962.3"/>
</dbReference>
<dbReference type="RefSeq" id="WP_003419290.1">
    <property type="nucleotide sequence ID" value="NZ_NVQJ01000014.1"/>
</dbReference>
<dbReference type="PDB" id="4W78">
    <property type="method" value="X-ray"/>
    <property type="resolution" value="1.54 A"/>
    <property type="chains" value="B/D/F/H=1-127"/>
</dbReference>
<dbReference type="PDB" id="4WNB">
    <property type="method" value="X-ray"/>
    <property type="resolution" value="1.76 A"/>
    <property type="chains" value="B=1-129"/>
</dbReference>
<dbReference type="PDBsum" id="4W78"/>
<dbReference type="PDBsum" id="4WNB"/>
<dbReference type="SMR" id="I6XHI0"/>
<dbReference type="STRING" id="83332.Rv3541c"/>
<dbReference type="PaxDb" id="83332-Rv3541c"/>
<dbReference type="DNASU" id="888475"/>
<dbReference type="GeneID" id="45427525"/>
<dbReference type="GeneID" id="888475"/>
<dbReference type="KEGG" id="mtu:Rv3541c"/>
<dbReference type="KEGG" id="mtv:RVBD_3541c"/>
<dbReference type="PATRIC" id="fig|83332.111.peg.3946"/>
<dbReference type="TubercuList" id="Rv3541c"/>
<dbReference type="eggNOG" id="COG2030">
    <property type="taxonomic scope" value="Bacteria"/>
</dbReference>
<dbReference type="InParanoid" id="I6XHI0"/>
<dbReference type="OrthoDB" id="4736831at2"/>
<dbReference type="BioCyc" id="MetaCyc:G185E-7818-MONOMER"/>
<dbReference type="UniPathway" id="UPA01058"/>
<dbReference type="Proteomes" id="UP000001584">
    <property type="component" value="Chromosome"/>
</dbReference>
<dbReference type="GO" id="GO:0016829">
    <property type="term" value="F:lyase activity"/>
    <property type="evidence" value="ECO:0007669"/>
    <property type="project" value="UniProtKB-KW"/>
</dbReference>
<dbReference type="GO" id="GO:0006707">
    <property type="term" value="P:cholesterol catabolic process"/>
    <property type="evidence" value="ECO:0007669"/>
    <property type="project" value="UniProtKB-UniPathway"/>
</dbReference>
<dbReference type="CDD" id="cd03455">
    <property type="entry name" value="SAV4209"/>
    <property type="match status" value="1"/>
</dbReference>
<dbReference type="FunFam" id="3.10.129.10:FF:000039">
    <property type="entry name" value="Beta-hydroxyacyl-ACP dehydratase"/>
    <property type="match status" value="1"/>
</dbReference>
<dbReference type="Gene3D" id="3.10.129.10">
    <property type="entry name" value="Hotdog Thioesterase"/>
    <property type="match status" value="1"/>
</dbReference>
<dbReference type="InterPro" id="IPR029069">
    <property type="entry name" value="HotDog_dom_sf"/>
</dbReference>
<dbReference type="SUPFAM" id="SSF54637">
    <property type="entry name" value="Thioesterase/thiol ester dehydrase-isomerase"/>
    <property type="match status" value="1"/>
</dbReference>
<accession>I6XHI0</accession>
<name>CHSH1_MYCTU</name>
<reference key="1">
    <citation type="journal article" date="1998" name="Nature">
        <title>Deciphering the biology of Mycobacterium tuberculosis from the complete genome sequence.</title>
        <authorList>
            <person name="Cole S.T."/>
            <person name="Brosch R."/>
            <person name="Parkhill J."/>
            <person name="Garnier T."/>
            <person name="Churcher C.M."/>
            <person name="Harris D.E."/>
            <person name="Gordon S.V."/>
            <person name="Eiglmeier K."/>
            <person name="Gas S."/>
            <person name="Barry C.E. III"/>
            <person name="Tekaia F."/>
            <person name="Badcock K."/>
            <person name="Basham D."/>
            <person name="Brown D."/>
            <person name="Chillingworth T."/>
            <person name="Connor R."/>
            <person name="Davies R.M."/>
            <person name="Devlin K."/>
            <person name="Feltwell T."/>
            <person name="Gentles S."/>
            <person name="Hamlin N."/>
            <person name="Holroyd S."/>
            <person name="Hornsby T."/>
            <person name="Jagels K."/>
            <person name="Krogh A."/>
            <person name="McLean J."/>
            <person name="Moule S."/>
            <person name="Murphy L.D."/>
            <person name="Oliver S."/>
            <person name="Osborne J."/>
            <person name="Quail M.A."/>
            <person name="Rajandream M.A."/>
            <person name="Rogers J."/>
            <person name="Rutter S."/>
            <person name="Seeger K."/>
            <person name="Skelton S."/>
            <person name="Squares S."/>
            <person name="Squares R."/>
            <person name="Sulston J.E."/>
            <person name="Taylor K."/>
            <person name="Whitehead S."/>
            <person name="Barrell B.G."/>
        </authorList>
    </citation>
    <scope>NUCLEOTIDE SEQUENCE [LARGE SCALE GENOMIC DNA]</scope>
    <source>
        <strain>ATCC 25618 / H37Rv</strain>
    </source>
</reference>
<reference key="2">
    <citation type="journal article" date="2011" name="Mol. Cell. Proteomics">
        <title>Proteogenomic analysis of Mycobacterium tuberculosis by high resolution mass spectrometry.</title>
        <authorList>
            <person name="Kelkar D.S."/>
            <person name="Kumar D."/>
            <person name="Kumar P."/>
            <person name="Balakrishnan L."/>
            <person name="Muthusamy B."/>
            <person name="Yadav A.K."/>
            <person name="Shrivastava P."/>
            <person name="Marimuthu A."/>
            <person name="Anand S."/>
            <person name="Sundaram H."/>
            <person name="Kingsbury R."/>
            <person name="Harsha H.C."/>
            <person name="Nair B."/>
            <person name="Prasad T.S."/>
            <person name="Chauhan D.S."/>
            <person name="Katoch K."/>
            <person name="Katoch V.M."/>
            <person name="Kumar P."/>
            <person name="Chaerkady R."/>
            <person name="Ramachandran S."/>
            <person name="Dash D."/>
            <person name="Pandey A."/>
        </authorList>
    </citation>
    <scope>IDENTIFICATION BY MASS SPECTROMETRY [LARGE SCALE ANALYSIS]</scope>
    <source>
        <strain>ATCC 25618 / H37Rv</strain>
    </source>
</reference>
<reference key="3">
    <citation type="journal article" date="2011" name="J. Biol. Chem.">
        <title>Pathway profiling in Mycobacterium tuberculosis: elucidation of cholesterol-derived catabolite and enzymes that catalyze its metabolism.</title>
        <authorList>
            <person name="Thomas S.T."/>
            <person name="VanderVen B.C."/>
            <person name="Sherman D.R."/>
            <person name="Russell D.G."/>
            <person name="Sampson N.S."/>
        </authorList>
    </citation>
    <scope>FUNCTION</scope>
    <scope>PATHWAY</scope>
    <source>
        <strain>H37Rv</strain>
    </source>
</reference>
<reference key="4">
    <citation type="journal article" date="2018" name="J. Bacteriol.">
        <title>Characterization of an aldolase involved in cholesterol side chain degradation in Mycobacterium tuberculosis.</title>
        <authorList>
            <person name="Gilbert S."/>
            <person name="Hood L."/>
            <person name="Seah S.Y.K."/>
        </authorList>
    </citation>
    <scope>ACTIVITY REGULATION</scope>
    <scope>INTERACTION WITH LTP2</scope>
</reference>
<reference key="5">
    <citation type="journal article" date="2019" name="Biochemistry">
        <title>Mycobacterium tuberculosis exploits a heterohexameric enoyl-CoA hydratase retro-aldolase complex for cholesterol catabolism.</title>
        <authorList>
            <person name="Yuan T."/>
            <person name="Yang M."/>
            <person name="Gehring K."/>
            <person name="Sampson N.S."/>
        </authorList>
    </citation>
    <scope>FUNCTION</scope>
    <scope>CATALYTIC ACTIVITY</scope>
    <scope>SUBUNIT</scope>
    <scope>SAXS AND EM STUDIES OF THE CHSH1-CHSH2-LTP2 COMPLEX</scope>
    <source>
        <strain>H37Rv</strain>
    </source>
</reference>
<reference evidence="8 9" key="6">
    <citation type="journal article" date="2014" name="ACS Chem. Biol.">
        <title>A distinct MaoC-like enoyl-CoA hydratase architecture mediates cholesterol catabolism in Mycobacterium tuberculosis.</title>
        <authorList>
            <person name="Yang M."/>
            <person name="Guja K.E."/>
            <person name="Thomas S.T."/>
            <person name="Garcia-Diaz M."/>
            <person name="Sampson N.S."/>
        </authorList>
    </citation>
    <scope>X-RAY CRYSTALLOGRAPHY (1.54 ANGSTROMS) IN COMPLEXES WITH CHSH2 AND SUBSTRATE ANALOG</scope>
    <scope>FUNCTION</scope>
    <scope>CATALYTIC ACTIVITY</scope>
    <scope>PATHWAY</scope>
    <scope>SUBUNIT</scope>
    <scope>MUTAGENESIS OF ASP-29 AND HIS-34</scope>
    <source>
        <strain>H37Rv</strain>
    </source>
</reference>
<protein>
    <recommendedName>
        <fullName evidence="6">3-oxo-4,17-pregnadiene-20-carboxyl-CoA hydratase beta subunit</fullName>
        <ecNumber evidence="2 4">4.2.1.-</ecNumber>
    </recommendedName>
    <alternativeName>
        <fullName evidence="6">Enoyl-CoA hydratase beta subunit</fullName>
    </alternativeName>
</protein>